<name>KEULE_ARATH</name>
<proteinExistence type="evidence at protein level"/>
<keyword id="KW-0131">Cell cycle</keyword>
<keyword id="KW-0132">Cell division</keyword>
<keyword id="KW-0175">Coiled coil</keyword>
<keyword id="KW-0963">Cytoplasm</keyword>
<keyword id="KW-0206">Cytoskeleton</keyword>
<keyword id="KW-0472">Membrane</keyword>
<keyword id="KW-0653">Protein transport</keyword>
<keyword id="KW-1185">Reference proteome</keyword>
<keyword id="KW-0813">Transport</keyword>
<sequence>MSYSDSDSSSHGGEYKNFRQITRERLLYEMLRSAKTGSSKSTWKVLIMDKLTVKIMSYACKMADITQEGVSLVEDIFRRRQPLPSMDAIYFIQPTKENVIMFLSDMSGKSPLYKKAFVFFSSPVSKELVGHIKKDSSVLPRIGALREMNLEFFAIDSQGFITDHERALEDLFGDEETSRKGDACLNVMASRIATVFASLREFPAVRYRAAKSLDASTMTTLRDLIPTKLAAGIWNCLAKHKQSIENFPQTETCELLILDRSIDQIAPVIHEWTYDAMCHDLLNMEGNKYVHVIPSKSGGQPEKKDVLLEEHDPIWLELRHAHIADASERLHDKMTNFLSKNKAAQLQGKRDGAELSTRDLQKMVQALPQYSEQIDKLSLHVEIARKLNDLIREQGLRELGQLEQDLVFGDAGMKDVIKYLSTQEEASREGKLRLLMILATIYPEKFEGEKGQNLMKLAKLSSDDMTAVNNMSLLGSAVDAKKNTPGGFTLKFDLHKKKRAVRKERQEEAAWQLSRFYPMIEELIEKLSKGELPKEDFPCMNDPSPSFHGSTSLSSAASSSQGQAAQSMRSRRTPTWAKPRGSDDGYSSDSVLRHASSDFRKMGQRIFVFIVGGATRSELKVCHKLSTKLKREVILGSTSLDDPPQFITKLKLLTANDDLSLDDLQI</sequence>
<protein>
    <recommendedName>
        <fullName>SNARE-interacting protein KEULE</fullName>
    </recommendedName>
</protein>
<comment type="function">
    <text evidence="3">Regulator of vesicle trafficking involved in cytokinesis and root hair development, but not required for cell elongation.</text>
</comment>
<comment type="subunit">
    <text evidence="3">Binds the syntaxin KNOLLE. Interacts with SEC6.</text>
</comment>
<comment type="interaction">
    <interactant intactId="EBI-603005">
        <id>Q9C5X3</id>
    </interactant>
    <interactant intactId="EBI-603017">
        <id>Q9S7P9</id>
        <label>SNAP33</label>
    </interactant>
    <organismsDiffer>false</organismsDiffer>
    <experiments>5</experiments>
</comment>
<comment type="subcellular location">
    <subcellularLocation>
        <location evidence="3">Cytoplasm</location>
    </subcellularLocation>
    <subcellularLocation>
        <location evidence="3">Membrane</location>
        <topology evidence="3">Peripheral membrane protein</topology>
    </subcellularLocation>
    <subcellularLocation>
        <location evidence="3">Cytoplasm</location>
        <location evidence="3">Cytoskeleton</location>
        <location evidence="3">Phragmoplast</location>
    </subcellularLocation>
    <text>Localized with its membrane receptor. During cytokinesis, localizes to the cell plate from a very early stage of cell plate formation and until the cell plate reaches the parental cell wall.</text>
</comment>
<comment type="tissue specificity">
    <text>Expressed throughout the plant, both in mitotically active and quiescent cells. Enriched in dividing tissues.</text>
</comment>
<comment type="similarity">
    <text evidence="4">Belongs to the STXBP/unc-18/SEC1 family.</text>
</comment>
<comment type="sequence caution" evidence="4">
    <conflict type="erroneous gene model prediction">
        <sequence resource="EMBL-CDS" id="AAF79632"/>
    </conflict>
</comment>
<organism>
    <name type="scientific">Arabidopsis thaliana</name>
    <name type="common">Mouse-ear cress</name>
    <dbReference type="NCBI Taxonomy" id="3702"/>
    <lineage>
        <taxon>Eukaryota</taxon>
        <taxon>Viridiplantae</taxon>
        <taxon>Streptophyta</taxon>
        <taxon>Embryophyta</taxon>
        <taxon>Tracheophyta</taxon>
        <taxon>Spermatophyta</taxon>
        <taxon>Magnoliopsida</taxon>
        <taxon>eudicotyledons</taxon>
        <taxon>Gunneridae</taxon>
        <taxon>Pentapetalae</taxon>
        <taxon>rosids</taxon>
        <taxon>malvids</taxon>
        <taxon>Brassicales</taxon>
        <taxon>Brassicaceae</taxon>
        <taxon>Camelineae</taxon>
        <taxon>Arabidopsis</taxon>
    </lineage>
</organism>
<gene>
    <name type="primary">KEU</name>
    <name type="ordered locus">At1g12360</name>
    <name type="ORF">F5O11.8</name>
</gene>
<dbReference type="EMBL" id="AF331066">
    <property type="protein sequence ID" value="AAK01291.1"/>
    <property type="molecule type" value="mRNA"/>
</dbReference>
<dbReference type="EMBL" id="AC025416">
    <property type="protein sequence ID" value="AAF79632.1"/>
    <property type="status" value="ALT_SEQ"/>
    <property type="molecule type" value="Genomic_DNA"/>
</dbReference>
<dbReference type="EMBL" id="CP002684">
    <property type="protein sequence ID" value="AEE28870.1"/>
    <property type="molecule type" value="Genomic_DNA"/>
</dbReference>
<dbReference type="EMBL" id="AK227584">
    <property type="protein sequence ID" value="BAE99577.1"/>
    <property type="molecule type" value="mRNA"/>
</dbReference>
<dbReference type="PIR" id="C86258">
    <property type="entry name" value="C86258"/>
</dbReference>
<dbReference type="RefSeq" id="NP_563905.1">
    <property type="nucleotide sequence ID" value="NM_101108.4"/>
</dbReference>
<dbReference type="SMR" id="Q9C5X3"/>
<dbReference type="BioGRID" id="23031">
    <property type="interactions" value="9"/>
</dbReference>
<dbReference type="FunCoup" id="Q9C5X3">
    <property type="interactions" value="4178"/>
</dbReference>
<dbReference type="IntAct" id="Q9C5X3">
    <property type="interactions" value="5"/>
</dbReference>
<dbReference type="STRING" id="3702.Q9C5X3"/>
<dbReference type="iPTMnet" id="Q9C5X3"/>
<dbReference type="PaxDb" id="3702-AT1G12360.1"/>
<dbReference type="ProteomicsDB" id="250624"/>
<dbReference type="EnsemblPlants" id="AT1G12360.1">
    <property type="protein sequence ID" value="AT1G12360.1"/>
    <property type="gene ID" value="AT1G12360"/>
</dbReference>
<dbReference type="GeneID" id="837791"/>
<dbReference type="Gramene" id="AT1G12360.1">
    <property type="protein sequence ID" value="AT1G12360.1"/>
    <property type="gene ID" value="AT1G12360"/>
</dbReference>
<dbReference type="KEGG" id="ath:AT1G12360"/>
<dbReference type="Araport" id="AT1G12360"/>
<dbReference type="TAIR" id="AT1G12360">
    <property type="gene designation" value="KEU"/>
</dbReference>
<dbReference type="eggNOG" id="KOG1300">
    <property type="taxonomic scope" value="Eukaryota"/>
</dbReference>
<dbReference type="HOGENOM" id="CLU_009210_3_0_1"/>
<dbReference type="InParanoid" id="Q9C5X3"/>
<dbReference type="OMA" id="PFTRPHT"/>
<dbReference type="OrthoDB" id="2228at2759"/>
<dbReference type="PhylomeDB" id="Q9C5X3"/>
<dbReference type="CD-CODE" id="4299E36E">
    <property type="entry name" value="Nucleolus"/>
</dbReference>
<dbReference type="PRO" id="PR:Q9C5X3"/>
<dbReference type="Proteomes" id="UP000006548">
    <property type="component" value="Chromosome 1"/>
</dbReference>
<dbReference type="ExpressionAtlas" id="Q9C5X3">
    <property type="expression patterns" value="baseline and differential"/>
</dbReference>
<dbReference type="GO" id="GO:0005856">
    <property type="term" value="C:cytoskeleton"/>
    <property type="evidence" value="ECO:0007669"/>
    <property type="project" value="UniProtKB-KW"/>
</dbReference>
<dbReference type="GO" id="GO:0005829">
    <property type="term" value="C:cytosol"/>
    <property type="evidence" value="ECO:0000314"/>
    <property type="project" value="TAIR"/>
</dbReference>
<dbReference type="GO" id="GO:0019898">
    <property type="term" value="C:extrinsic component of membrane"/>
    <property type="evidence" value="ECO:0000314"/>
    <property type="project" value="TAIR"/>
</dbReference>
<dbReference type="GO" id="GO:0009524">
    <property type="term" value="C:phragmoplast"/>
    <property type="evidence" value="ECO:0007669"/>
    <property type="project" value="UniProtKB-SubCell"/>
</dbReference>
<dbReference type="GO" id="GO:0000325">
    <property type="term" value="C:plant-type vacuole"/>
    <property type="evidence" value="ECO:0007005"/>
    <property type="project" value="TAIR"/>
</dbReference>
<dbReference type="GO" id="GO:0000911">
    <property type="term" value="P:cytokinesis by cell plate formation"/>
    <property type="evidence" value="ECO:0000315"/>
    <property type="project" value="TAIR"/>
</dbReference>
<dbReference type="GO" id="GO:0015031">
    <property type="term" value="P:protein transport"/>
    <property type="evidence" value="ECO:0007669"/>
    <property type="project" value="UniProtKB-KW"/>
</dbReference>
<dbReference type="GO" id="GO:0016192">
    <property type="term" value="P:vesicle-mediated transport"/>
    <property type="evidence" value="ECO:0007669"/>
    <property type="project" value="InterPro"/>
</dbReference>
<dbReference type="FunFam" id="1.25.40.60:FF:000008">
    <property type="entry name" value="Protein transport Sec1b"/>
    <property type="match status" value="1"/>
</dbReference>
<dbReference type="FunFam" id="3.40.50.2060:FF:000014">
    <property type="entry name" value="SNARE-interacting protein KEULE"/>
    <property type="match status" value="1"/>
</dbReference>
<dbReference type="FunFam" id="3.90.830.10:FF:000008">
    <property type="entry name" value="SNARE-interacting protein KEULE"/>
    <property type="match status" value="1"/>
</dbReference>
<dbReference type="Gene3D" id="1.25.40.60">
    <property type="match status" value="1"/>
</dbReference>
<dbReference type="Gene3D" id="3.40.50.1910">
    <property type="match status" value="1"/>
</dbReference>
<dbReference type="Gene3D" id="3.40.50.2060">
    <property type="match status" value="1"/>
</dbReference>
<dbReference type="Gene3D" id="3.90.830.10">
    <property type="entry name" value="Syntaxin Binding Protein 1, Chain A, domain 2"/>
    <property type="match status" value="1"/>
</dbReference>
<dbReference type="InterPro" id="IPR043154">
    <property type="entry name" value="Sec-1-like_dom1"/>
</dbReference>
<dbReference type="InterPro" id="IPR043127">
    <property type="entry name" value="Sec-1-like_dom3a"/>
</dbReference>
<dbReference type="InterPro" id="IPR001619">
    <property type="entry name" value="Sec1-like"/>
</dbReference>
<dbReference type="InterPro" id="IPR027482">
    <property type="entry name" value="Sec1-like_dom2"/>
</dbReference>
<dbReference type="InterPro" id="IPR036045">
    <property type="entry name" value="Sec1-like_sf"/>
</dbReference>
<dbReference type="PANTHER" id="PTHR11679">
    <property type="entry name" value="VESICLE PROTEIN SORTING-ASSOCIATED"/>
    <property type="match status" value="1"/>
</dbReference>
<dbReference type="Pfam" id="PF00995">
    <property type="entry name" value="Sec1"/>
    <property type="match status" value="1"/>
</dbReference>
<dbReference type="PIRSF" id="PIRSF005715">
    <property type="entry name" value="VPS45_Sec1"/>
    <property type="match status" value="1"/>
</dbReference>
<dbReference type="SUPFAM" id="SSF56815">
    <property type="entry name" value="Sec1/munc18-like (SM) proteins"/>
    <property type="match status" value="1"/>
</dbReference>
<reference key="1">
    <citation type="journal article" date="2001" name="J. Cell Biol.">
        <title>The cytokinesis gene KEULE encodes a Sec1 protein that binds the syntaxin KNOLLE.</title>
        <authorList>
            <person name="Assaad F.F."/>
            <person name="Huet Y."/>
            <person name="Mayer U."/>
            <person name="Juergens G."/>
        </authorList>
    </citation>
    <scope>NUCLEOTIDE SEQUENCE [MRNA]</scope>
    <source>
        <tissue>Flower</tissue>
    </source>
</reference>
<reference key="2">
    <citation type="journal article" date="2000" name="Nature">
        <title>Sequence and analysis of chromosome 1 of the plant Arabidopsis thaliana.</title>
        <authorList>
            <person name="Theologis A."/>
            <person name="Ecker J.R."/>
            <person name="Palm C.J."/>
            <person name="Federspiel N.A."/>
            <person name="Kaul S."/>
            <person name="White O."/>
            <person name="Alonso J."/>
            <person name="Altafi H."/>
            <person name="Araujo R."/>
            <person name="Bowman C.L."/>
            <person name="Brooks S.Y."/>
            <person name="Buehler E."/>
            <person name="Chan A."/>
            <person name="Chao Q."/>
            <person name="Chen H."/>
            <person name="Cheuk R.F."/>
            <person name="Chin C.W."/>
            <person name="Chung M.K."/>
            <person name="Conn L."/>
            <person name="Conway A.B."/>
            <person name="Conway A.R."/>
            <person name="Creasy T.H."/>
            <person name="Dewar K."/>
            <person name="Dunn P."/>
            <person name="Etgu P."/>
            <person name="Feldblyum T.V."/>
            <person name="Feng J.-D."/>
            <person name="Fong B."/>
            <person name="Fujii C.Y."/>
            <person name="Gill J.E."/>
            <person name="Goldsmith A.D."/>
            <person name="Haas B."/>
            <person name="Hansen N.F."/>
            <person name="Hughes B."/>
            <person name="Huizar L."/>
            <person name="Hunter J.L."/>
            <person name="Jenkins J."/>
            <person name="Johnson-Hopson C."/>
            <person name="Khan S."/>
            <person name="Khaykin E."/>
            <person name="Kim C.J."/>
            <person name="Koo H.L."/>
            <person name="Kremenetskaia I."/>
            <person name="Kurtz D.B."/>
            <person name="Kwan A."/>
            <person name="Lam B."/>
            <person name="Langin-Hooper S."/>
            <person name="Lee A."/>
            <person name="Lee J.M."/>
            <person name="Lenz C.A."/>
            <person name="Li J.H."/>
            <person name="Li Y.-P."/>
            <person name="Lin X."/>
            <person name="Liu S.X."/>
            <person name="Liu Z.A."/>
            <person name="Luros J.S."/>
            <person name="Maiti R."/>
            <person name="Marziali A."/>
            <person name="Militscher J."/>
            <person name="Miranda M."/>
            <person name="Nguyen M."/>
            <person name="Nierman W.C."/>
            <person name="Osborne B.I."/>
            <person name="Pai G."/>
            <person name="Peterson J."/>
            <person name="Pham P.K."/>
            <person name="Rizzo M."/>
            <person name="Rooney T."/>
            <person name="Rowley D."/>
            <person name="Sakano H."/>
            <person name="Salzberg S.L."/>
            <person name="Schwartz J.R."/>
            <person name="Shinn P."/>
            <person name="Southwick A.M."/>
            <person name="Sun H."/>
            <person name="Tallon L.J."/>
            <person name="Tambunga G."/>
            <person name="Toriumi M.J."/>
            <person name="Town C.D."/>
            <person name="Utterback T."/>
            <person name="Van Aken S."/>
            <person name="Vaysberg M."/>
            <person name="Vysotskaia V.S."/>
            <person name="Walker M."/>
            <person name="Wu D."/>
            <person name="Yu G."/>
            <person name="Fraser C.M."/>
            <person name="Venter J.C."/>
            <person name="Davis R.W."/>
        </authorList>
    </citation>
    <scope>NUCLEOTIDE SEQUENCE [LARGE SCALE GENOMIC DNA]</scope>
    <source>
        <strain>cv. Columbia</strain>
    </source>
</reference>
<reference key="3">
    <citation type="journal article" date="2017" name="Plant J.">
        <title>Araport11: a complete reannotation of the Arabidopsis thaliana reference genome.</title>
        <authorList>
            <person name="Cheng C.Y."/>
            <person name="Krishnakumar V."/>
            <person name="Chan A.P."/>
            <person name="Thibaud-Nissen F."/>
            <person name="Schobel S."/>
            <person name="Town C.D."/>
        </authorList>
    </citation>
    <scope>GENOME REANNOTATION</scope>
    <source>
        <strain>cv. Columbia</strain>
    </source>
</reference>
<reference key="4">
    <citation type="submission" date="2006-07" db="EMBL/GenBank/DDBJ databases">
        <title>Large-scale analysis of RIKEN Arabidopsis full-length (RAFL) cDNAs.</title>
        <authorList>
            <person name="Totoki Y."/>
            <person name="Seki M."/>
            <person name="Ishida J."/>
            <person name="Nakajima M."/>
            <person name="Enju A."/>
            <person name="Kamiya A."/>
            <person name="Narusaka M."/>
            <person name="Shin-i T."/>
            <person name="Nakagawa M."/>
            <person name="Sakamoto N."/>
            <person name="Oishi K."/>
            <person name="Kohara Y."/>
            <person name="Kobayashi M."/>
            <person name="Toyoda A."/>
            <person name="Sakaki Y."/>
            <person name="Sakurai T."/>
            <person name="Iida K."/>
            <person name="Akiyama K."/>
            <person name="Satou M."/>
            <person name="Toyoda T."/>
            <person name="Konagaya A."/>
            <person name="Carninci P."/>
            <person name="Kawai J."/>
            <person name="Hayashizaki Y."/>
            <person name="Shinozaki K."/>
        </authorList>
    </citation>
    <scope>NUCLEOTIDE SEQUENCE [LARGE SCALE MRNA]</scope>
    <source>
        <strain>cv. Columbia</strain>
    </source>
</reference>
<reference key="5">
    <citation type="journal article" date="2009" name="Plant Physiol.">
        <title>Large-scale Arabidopsis phosphoproteome profiling reveals novel chloroplast kinase substrates and phosphorylation networks.</title>
        <authorList>
            <person name="Reiland S."/>
            <person name="Messerli G."/>
            <person name="Baerenfaller K."/>
            <person name="Gerrits B."/>
            <person name="Endler A."/>
            <person name="Grossmann J."/>
            <person name="Gruissem W."/>
            <person name="Baginsky S."/>
        </authorList>
    </citation>
    <scope>IDENTIFICATION BY MASS SPECTROMETRY [LARGE SCALE ANALYSIS]</scope>
</reference>
<reference key="6">
    <citation type="journal article" date="2013" name="Mol. Plant">
        <title>Regulation of cytokinesis by exocyst subunit SEC6 and KEULE in Arabidopsis thaliana.</title>
        <authorList>
            <person name="Wu J."/>
            <person name="Tan X."/>
            <person name="Wu C."/>
            <person name="Cao K."/>
            <person name="Li Y."/>
            <person name="Bao Y."/>
        </authorList>
    </citation>
    <scope>FUNCTION</scope>
    <scope>INTERACTION WITH SEC6</scope>
    <scope>SUBCELLULAR LOCATION</scope>
</reference>
<evidence type="ECO:0000255" key="1"/>
<evidence type="ECO:0000256" key="2">
    <source>
        <dbReference type="SAM" id="MobiDB-lite"/>
    </source>
</evidence>
<evidence type="ECO:0000269" key="3">
    <source>
    </source>
</evidence>
<evidence type="ECO:0000305" key="4"/>
<feature type="chain" id="PRO_0000206294" description="SNARE-interacting protein KEULE">
    <location>
        <begin position="1"/>
        <end position="666"/>
    </location>
</feature>
<feature type="region of interest" description="Disordered" evidence="2">
    <location>
        <begin position="534"/>
        <end position="589"/>
    </location>
</feature>
<feature type="coiled-coil region" evidence="1">
    <location>
        <begin position="340"/>
        <end position="377"/>
    </location>
</feature>
<feature type="compositionally biased region" description="Low complexity" evidence="2">
    <location>
        <begin position="550"/>
        <end position="568"/>
    </location>
</feature>
<feature type="sequence conflict" description="In Ref. 1; AAK01291." evidence="4" ref="1">
    <original>Q</original>
    <variation>E</variation>
    <location>
        <position position="452"/>
    </location>
</feature>
<accession>Q9C5X3</accession>
<accession>Q0WTH1</accession>
<accession>Q9LNB0</accession>